<keyword id="KW-0378">Hydrolase</keyword>
<keyword id="KW-1185">Reference proteome</keyword>
<sequence length="334" mass="36712">MSDQANQGDLEIRPSPLLKVINDLHSKYKSLKEGIVANYIPELAKVNPDLFSISIVTVDGQVYQVGDYQQLFTIQSISKVFAYGLALEDHGRDYVLTRVGVEPTGEAFNAIILDEQSKRPYNPMVNAGAIATTSLIKGAGATERLNRVLEMFRRYIGHDVFVDISVFTSERSTGHRNRAMAHLMLNFGMIDRNIEEALDLYFQQCAVMVNCHDLAVMAATLANRGVNPITGEQAVNSRYIKDILSVMYTCGMYNFAGEWAYKVGIPAKSGVCGGIMAVVPNLMGIAVFSPPLDIRGNSVRGVKVCEELSQQLGLHLFECMKVGNGEWGVGNCEC</sequence>
<proteinExistence type="inferred from homology"/>
<evidence type="ECO:0000255" key="1">
    <source>
        <dbReference type="HAMAP-Rule" id="MF_00313"/>
    </source>
</evidence>
<gene>
    <name evidence="1" type="primary">glsA</name>
    <name type="ordered locus">all2934</name>
</gene>
<organism>
    <name type="scientific">Nostoc sp. (strain PCC 7120 / SAG 25.82 / UTEX 2576)</name>
    <dbReference type="NCBI Taxonomy" id="103690"/>
    <lineage>
        <taxon>Bacteria</taxon>
        <taxon>Bacillati</taxon>
        <taxon>Cyanobacteriota</taxon>
        <taxon>Cyanophyceae</taxon>
        <taxon>Nostocales</taxon>
        <taxon>Nostocaceae</taxon>
        <taxon>Nostoc</taxon>
    </lineage>
</organism>
<accession>Q8YSZ5</accession>
<name>GLSA_NOSS1</name>
<protein>
    <recommendedName>
        <fullName evidence="1">Glutaminase</fullName>
        <ecNumber evidence="1">3.5.1.2</ecNumber>
    </recommendedName>
</protein>
<reference key="1">
    <citation type="journal article" date="2001" name="DNA Res.">
        <title>Complete genomic sequence of the filamentous nitrogen-fixing cyanobacterium Anabaena sp. strain PCC 7120.</title>
        <authorList>
            <person name="Kaneko T."/>
            <person name="Nakamura Y."/>
            <person name="Wolk C.P."/>
            <person name="Kuritz T."/>
            <person name="Sasamoto S."/>
            <person name="Watanabe A."/>
            <person name="Iriguchi M."/>
            <person name="Ishikawa A."/>
            <person name="Kawashima K."/>
            <person name="Kimura T."/>
            <person name="Kishida Y."/>
            <person name="Kohara M."/>
            <person name="Matsumoto M."/>
            <person name="Matsuno A."/>
            <person name="Muraki A."/>
            <person name="Nakazaki N."/>
            <person name="Shimpo S."/>
            <person name="Sugimoto M."/>
            <person name="Takazawa M."/>
            <person name="Yamada M."/>
            <person name="Yasuda M."/>
            <person name="Tabata S."/>
        </authorList>
    </citation>
    <scope>NUCLEOTIDE SEQUENCE [LARGE SCALE GENOMIC DNA]</scope>
    <source>
        <strain>PCC 7120 / SAG 25.82 / UTEX 2576</strain>
    </source>
</reference>
<dbReference type="EC" id="3.5.1.2" evidence="1"/>
<dbReference type="EMBL" id="BA000019">
    <property type="protein sequence ID" value="BAB74633.1"/>
    <property type="molecule type" value="Genomic_DNA"/>
</dbReference>
<dbReference type="PIR" id="AG2172">
    <property type="entry name" value="AG2172"/>
</dbReference>
<dbReference type="RefSeq" id="WP_010997085.1">
    <property type="nucleotide sequence ID" value="NZ_RSCN01000003.1"/>
</dbReference>
<dbReference type="SMR" id="Q8YSZ5"/>
<dbReference type="STRING" id="103690.gene:10494970"/>
<dbReference type="KEGG" id="ana:all2934"/>
<dbReference type="eggNOG" id="COG2066">
    <property type="taxonomic scope" value="Bacteria"/>
</dbReference>
<dbReference type="OrthoDB" id="9788822at2"/>
<dbReference type="BRENDA" id="3.5.1.2">
    <property type="organism ID" value="319"/>
</dbReference>
<dbReference type="Proteomes" id="UP000002483">
    <property type="component" value="Chromosome"/>
</dbReference>
<dbReference type="GO" id="GO:0004359">
    <property type="term" value="F:glutaminase activity"/>
    <property type="evidence" value="ECO:0007669"/>
    <property type="project" value="UniProtKB-UniRule"/>
</dbReference>
<dbReference type="GO" id="GO:0006537">
    <property type="term" value="P:glutamate biosynthetic process"/>
    <property type="evidence" value="ECO:0007669"/>
    <property type="project" value="TreeGrafter"/>
</dbReference>
<dbReference type="GO" id="GO:0006543">
    <property type="term" value="P:glutamine catabolic process"/>
    <property type="evidence" value="ECO:0007669"/>
    <property type="project" value="TreeGrafter"/>
</dbReference>
<dbReference type="FunFam" id="3.40.710.10:FF:000005">
    <property type="entry name" value="Glutaminase"/>
    <property type="match status" value="1"/>
</dbReference>
<dbReference type="Gene3D" id="3.40.710.10">
    <property type="entry name" value="DD-peptidase/beta-lactamase superfamily"/>
    <property type="match status" value="1"/>
</dbReference>
<dbReference type="HAMAP" id="MF_00313">
    <property type="entry name" value="Glutaminase"/>
    <property type="match status" value="1"/>
</dbReference>
<dbReference type="InterPro" id="IPR012338">
    <property type="entry name" value="Beta-lactam/transpept-like"/>
</dbReference>
<dbReference type="InterPro" id="IPR015868">
    <property type="entry name" value="Glutaminase"/>
</dbReference>
<dbReference type="NCBIfam" id="TIGR03814">
    <property type="entry name" value="Gln_ase"/>
    <property type="match status" value="1"/>
</dbReference>
<dbReference type="PANTHER" id="PTHR12544">
    <property type="entry name" value="GLUTAMINASE"/>
    <property type="match status" value="1"/>
</dbReference>
<dbReference type="PANTHER" id="PTHR12544:SF29">
    <property type="entry name" value="GLUTAMINASE"/>
    <property type="match status" value="1"/>
</dbReference>
<dbReference type="Pfam" id="PF04960">
    <property type="entry name" value="Glutaminase"/>
    <property type="match status" value="1"/>
</dbReference>
<dbReference type="SUPFAM" id="SSF56601">
    <property type="entry name" value="beta-lactamase/transpeptidase-like"/>
    <property type="match status" value="1"/>
</dbReference>
<comment type="catalytic activity">
    <reaction evidence="1">
        <text>L-glutamine + H2O = L-glutamate + NH4(+)</text>
        <dbReference type="Rhea" id="RHEA:15889"/>
        <dbReference type="ChEBI" id="CHEBI:15377"/>
        <dbReference type="ChEBI" id="CHEBI:28938"/>
        <dbReference type="ChEBI" id="CHEBI:29985"/>
        <dbReference type="ChEBI" id="CHEBI:58359"/>
        <dbReference type="EC" id="3.5.1.2"/>
    </reaction>
</comment>
<comment type="subunit">
    <text evidence="1">Homotetramer.</text>
</comment>
<comment type="similarity">
    <text evidence="1">Belongs to the glutaminase family.</text>
</comment>
<feature type="chain" id="PRO_0000110587" description="Glutaminase">
    <location>
        <begin position="1"/>
        <end position="334"/>
    </location>
</feature>
<feature type="binding site" evidence="1">
    <location>
        <position position="76"/>
    </location>
    <ligand>
        <name>substrate</name>
    </ligand>
</feature>
<feature type="binding site" evidence="1">
    <location>
        <position position="126"/>
    </location>
    <ligand>
        <name>substrate</name>
    </ligand>
</feature>
<feature type="binding site" evidence="1">
    <location>
        <position position="170"/>
    </location>
    <ligand>
        <name>substrate</name>
    </ligand>
</feature>
<feature type="binding site" evidence="1">
    <location>
        <position position="177"/>
    </location>
    <ligand>
        <name>substrate</name>
    </ligand>
</feature>
<feature type="binding site" evidence="1">
    <location>
        <position position="201"/>
    </location>
    <ligand>
        <name>substrate</name>
    </ligand>
</feature>
<feature type="binding site" evidence="1">
    <location>
        <position position="253"/>
    </location>
    <ligand>
        <name>substrate</name>
    </ligand>
</feature>
<feature type="binding site" evidence="1">
    <location>
        <position position="271"/>
    </location>
    <ligand>
        <name>substrate</name>
    </ligand>
</feature>